<keyword id="KW-0002">3D-structure</keyword>
<keyword id="KW-0051">Antiviral defense</keyword>
<keyword id="KW-0067">ATP-binding</keyword>
<keyword id="KW-0342">GTP-binding</keyword>
<keyword id="KW-1017">Isopeptide bond</keyword>
<keyword id="KW-0460">Magnesium</keyword>
<keyword id="KW-0479">Metal-binding</keyword>
<keyword id="KW-0546">Nucleotide metabolism</keyword>
<keyword id="KW-0547">Nucleotide-binding</keyword>
<keyword id="KW-0548">Nucleotidyltransferase</keyword>
<keyword id="KW-0808">Transferase</keyword>
<sequence length="381" mass="43256">MELQPQFNEFLANIRPTDTQKEDWKSGARTLRERLKNFEPLKEIVVSTFLQGSIRRSTAIRPLGDKRPDVDIVVVTNLDHTRMSPTDAMDLFIPFLEKYYPGKWETQGRSFGITLSYVELDLVITAIPESGAEKSHLEQLYKSESVLTVNSLEEQTDWRLNKSWTPNTGWLSESNSAQVEDAPASEWKAHPLVLPDREKNEWGRTHPLAQIRWTAEKNRLCNGHYINLVRAVKWWRQQNSEDLPKYPKGYPLEHLIGNALDNGTTSMAQGLVQLMDTFLSRWAAIYNQKSKPWLSDHGVAEHDVMARLTAEDFCSFYEGIASAAEIARNALASEEPQESAQLWRQLFGSKFPLPGPQGGDRNGGFTTPSKPAEPQKTGRFA</sequence>
<feature type="chain" id="PRO_0000447704" description="Cyclic AMP-AMP-GMP synthase">
    <location>
        <begin position="1"/>
        <end position="381"/>
    </location>
</feature>
<feature type="region of interest" description="Disordered" evidence="1">
    <location>
        <begin position="348"/>
        <end position="381"/>
    </location>
</feature>
<feature type="active site" evidence="14 15">
    <location>
        <position position="69"/>
    </location>
</feature>
<feature type="active site" evidence="14 15">
    <location>
        <position position="71"/>
    </location>
</feature>
<feature type="active site" evidence="14 15">
    <location>
        <position position="121"/>
    </location>
</feature>
<feature type="binding site" evidence="5 14 16 23 24 25 26">
    <location>
        <position position="51"/>
    </location>
    <ligand>
        <name>ATP</name>
        <dbReference type="ChEBI" id="CHEBI:30616"/>
        <label>acceptor</label>
    </ligand>
</feature>
<feature type="binding site" evidence="4 5 6 23 24 25">
    <location>
        <position position="53"/>
    </location>
    <ligand>
        <name>ATP</name>
        <dbReference type="ChEBI" id="CHEBI:30616"/>
        <label>donor</label>
    </ligand>
</feature>
<feature type="binding site" evidence="4 5 6 23 24 25 26">
    <location>
        <position position="56"/>
    </location>
    <ligand>
        <name>ATP</name>
        <dbReference type="ChEBI" id="CHEBI:30616"/>
        <label>donor</label>
    </ligand>
</feature>
<feature type="binding site" evidence="4 23">
    <location>
        <position position="69"/>
    </location>
    <ligand>
        <name>ATP</name>
        <dbReference type="ChEBI" id="CHEBI:30616"/>
        <label>donor</label>
    </ligand>
</feature>
<feature type="binding site" evidence="4 5 21 23 24">
    <location>
        <position position="69"/>
    </location>
    <ligand>
        <name>Mg(2+)</name>
        <dbReference type="ChEBI" id="CHEBI:18420"/>
        <label>A</label>
        <note>catalytic</note>
    </ligand>
</feature>
<feature type="binding site" evidence="4 5 21 23 24 25 26">
    <location>
        <position position="69"/>
    </location>
    <ligand>
        <name>Mg(2+)</name>
        <dbReference type="ChEBI" id="CHEBI:18420"/>
        <label>B</label>
        <note>catalytic</note>
    </ligand>
</feature>
<feature type="binding site" evidence="4 5 21 23 24 25 26">
    <location>
        <position position="71"/>
    </location>
    <ligand>
        <name>ATP</name>
        <dbReference type="ChEBI" id="CHEBI:30616"/>
        <label>donor</label>
    </ligand>
</feature>
<feature type="binding site" evidence="4 5 21 23 24 25 26">
    <location>
        <position position="71"/>
    </location>
    <ligand>
        <name>Mg(2+)</name>
        <dbReference type="ChEBI" id="CHEBI:18420"/>
        <label>A</label>
        <note>catalytic</note>
    </ligand>
</feature>
<feature type="binding site" evidence="4 5 19 23 24 25 26">
    <location>
        <position position="71"/>
    </location>
    <ligand>
        <name>Mg(2+)</name>
        <dbReference type="ChEBI" id="CHEBI:18420"/>
        <label>B</label>
        <note>catalytic</note>
    </ligand>
</feature>
<feature type="binding site" evidence="5 14 16 23 24 25 26">
    <location>
        <position position="109"/>
    </location>
    <ligand>
        <name>ATP</name>
        <dbReference type="ChEBI" id="CHEBI:30616"/>
        <label>acceptor</label>
    </ligand>
</feature>
<feature type="binding site" evidence="4 5 21 23 24">
    <location>
        <position position="121"/>
    </location>
    <ligand>
        <name>Mg(2+)</name>
        <dbReference type="ChEBI" id="CHEBI:18420"/>
        <label>A</label>
        <note>catalytic</note>
    </ligand>
</feature>
<feature type="binding site" evidence="5 24">
    <location>
        <position position="196"/>
    </location>
    <ligand>
        <name>ATP</name>
        <dbReference type="ChEBI" id="CHEBI:30616"/>
        <label>acceptor</label>
    </ligand>
</feature>
<feature type="binding site" evidence="5 24">
    <location>
        <position position="196"/>
    </location>
    <ligand>
        <name>Mg(2+)</name>
        <dbReference type="ChEBI" id="CHEBI:18420"/>
        <label>C</label>
    </ligand>
</feature>
<feature type="binding site" evidence="5 14 16 23 24 25 26">
    <location>
        <position position="197"/>
    </location>
    <ligand>
        <name>ATP</name>
        <dbReference type="ChEBI" id="CHEBI:30616"/>
        <label>acceptor</label>
    </ligand>
</feature>
<feature type="binding site" evidence="5 14 16 23 24 25 26">
    <location>
        <position position="204"/>
    </location>
    <ligand>
        <name>ATP</name>
        <dbReference type="ChEBI" id="CHEBI:30616"/>
        <label>acceptor</label>
    </ligand>
</feature>
<feature type="binding site" evidence="5 14 16 23 24 25 26">
    <location>
        <position position="205"/>
    </location>
    <ligand>
        <name>ATP</name>
        <dbReference type="ChEBI" id="CHEBI:30616"/>
        <label>acceptor</label>
    </ligand>
</feature>
<feature type="binding site" evidence="4 5 23 24 25 26">
    <location>
        <position position="210"/>
    </location>
    <ligand>
        <name>ATP</name>
        <dbReference type="ChEBI" id="CHEBI:30616"/>
        <label>donor</label>
    </ligand>
</feature>
<feature type="binding site" evidence="25 26">
    <location>
        <position position="233"/>
    </location>
    <ligand>
        <name>ATP</name>
        <dbReference type="ChEBI" id="CHEBI:30616"/>
        <label>donor</label>
    </ligand>
</feature>
<feature type="binding site" evidence="5 24 25 26">
    <location>
        <position position="250"/>
    </location>
    <ligand>
        <name>ATP</name>
        <dbReference type="ChEBI" id="CHEBI:30616"/>
        <label>donor</label>
    </ligand>
</feature>
<feature type="binding site" evidence="4 5 19 21 23 24">
    <location>
        <position position="258"/>
    </location>
    <ligand>
        <name>Mg(2+)</name>
        <dbReference type="ChEBI" id="CHEBI:18420"/>
        <label>3</label>
        <note>structural</note>
    </ligand>
</feature>
<feature type="binding site" evidence="4 5 19 21 23 24">
    <location>
        <position position="260"/>
    </location>
    <ligand>
        <name>Mg(2+)</name>
        <dbReference type="ChEBI" id="CHEBI:18420"/>
        <label>3</label>
        <note>structural</note>
    </ligand>
</feature>
<feature type="binding site" evidence="4 5 23 24">
    <location>
        <position position="304"/>
    </location>
    <ligand>
        <name>ATP</name>
        <dbReference type="ChEBI" id="CHEBI:30616"/>
        <label>donor</label>
    </ligand>
</feature>
<feature type="binding site" evidence="5 14 16 23 24 25 26">
    <location>
        <position position="307"/>
    </location>
    <ligand>
        <name>ATP</name>
        <dbReference type="ChEBI" id="CHEBI:30616"/>
        <label>acceptor</label>
    </ligand>
</feature>
<feature type="site" description="Important for GTP discrimination" evidence="5">
    <location>
        <position position="51"/>
    </location>
</feature>
<feature type="mutagenesis site" description="No longer interacts with Cap2." evidence="6">
    <original>RTLRER</original>
    <variation>ATLREA</variation>
    <location>
        <begin position="29"/>
        <end position="34"/>
    </location>
</feature>
<feature type="mutagenesis site" description="No longer interacts with Cap2." evidence="6">
    <original>T</original>
    <variation>K</variation>
    <location>
        <position position="30"/>
    </location>
</feature>
<feature type="mutagenesis site" description="Significantly decreased incorporation of GTP but not ATP, makes 3'3'3'-cAAA." evidence="5">
    <original>Q</original>
    <variation>A</variation>
    <variation>S</variation>
    <variation>T</variation>
    <location>
        <position position="51"/>
    </location>
</feature>
<feature type="mutagenesis site" description="No longer protects against phage T2." evidence="3">
    <original>DVD</original>
    <variation>AVA</variation>
    <location>
        <begin position="69"/>
        <end position="71"/>
    </location>
</feature>
<feature type="mutagenesis site" description="Nearly complete loss of enzymatic activity." evidence="4">
    <original>DVD</original>
    <variation>KVK</variation>
    <location>
        <begin position="69"/>
        <end position="71"/>
    </location>
</feature>
<feature type="mutagenesis site" description="Retains a very small amount of enzymatic activity, may bind GTP better than wild-type." evidence="4">
    <original>D</original>
    <variation>A</variation>
    <location>
        <position position="69"/>
    </location>
</feature>
<feature type="mutagenesis site" description="Nearly complete loss of enzymatic activity." evidence="4">
    <original>D</original>
    <variation>K</variation>
    <location>
        <position position="69"/>
    </location>
</feature>
<feature type="mutagenesis site" description="No longer makes cyclic nucleotides." evidence="5">
    <original>D</original>
    <variation>N</variation>
    <location>
        <position position="71"/>
    </location>
</feature>
<feature type="mutagenesis site" description="Decreased interaction with Cap2." evidence="6">
    <original>WL</original>
    <variation>AA</variation>
    <location>
        <begin position="170"/>
        <end position="171"/>
    </location>
</feature>
<feature type="mutagenesis site" description="Slight decrease in synthesis of 3'3'3'-cAAG." evidence="5">
    <original>D</original>
    <variation>A</variation>
    <location>
        <position position="196"/>
    </location>
</feature>
<feature type="mutagenesis site" description="Decreased incorporation of GTP but not ATP." evidence="5">
    <original>T</original>
    <variation>A</variation>
    <location>
        <position position="205"/>
    </location>
</feature>
<feature type="mutagenesis site" description="Nearly wild-type cyclic nucleotide synthesis." evidence="5">
    <original>Q</original>
    <variation>A</variation>
    <location>
        <position position="210"/>
    </location>
</feature>
<feature type="mutagenesis site" description="No cyclic nucleotide synthesis." evidence="5">
    <original>Y</original>
    <variation>A</variation>
    <location>
        <position position="250"/>
    </location>
</feature>
<feature type="mutagenesis site" description="No longer conjugates with Cap2." evidence="6">
    <location>
        <begin position="363"/>
        <end position="381"/>
    </location>
</feature>
<feature type="mutagenesis site" description="CdnD-GFP fusion cleaved by Cap3." evidence="6">
    <original>Q</original>
    <variation>A</variation>
    <location>
        <position position="375"/>
    </location>
</feature>
<feature type="mutagenesis site" description="CdnD-GFP fusion cleaved by Cap3." evidence="6">
    <original>K</original>
    <variation>A</variation>
    <location>
        <position position="376"/>
    </location>
</feature>
<feature type="mutagenesis site" description="CdnD-GFP fusion cleaved by Cap3." evidence="6">
    <original>T</original>
    <variation>A</variation>
    <location>
        <position position="377"/>
    </location>
</feature>
<feature type="mutagenesis site" description="CdnD-GFP fusion cleaved by Cap3." evidence="6">
    <original>G</original>
    <variation>E</variation>
    <location>
        <position position="378"/>
    </location>
</feature>
<feature type="mutagenesis site" description="Reduced CdnD-GFP fusion cleavage by Cap3." evidence="6">
    <original>R</original>
    <variation>A</variation>
    <location>
        <position position="379"/>
    </location>
</feature>
<feature type="mutagenesis site" description="Significantly reduced CdnD-GFP fusion cleavage by Cap3." evidence="6">
    <original>F</original>
    <variation>A</variation>
    <location>
        <position position="380"/>
    </location>
</feature>
<feature type="mutagenesis site" description="Reduced CdnD-GFP fusion cleavage by Cap3." evidence="6">
    <original>A</original>
    <variation>E</variation>
    <location>
        <position position="381"/>
    </location>
</feature>
<feature type="helix" evidence="29">
    <location>
        <begin position="4"/>
        <end position="14"/>
    </location>
</feature>
<feature type="helix" evidence="29">
    <location>
        <begin position="18"/>
        <end position="37"/>
    </location>
</feature>
<feature type="helix" evidence="29">
    <location>
        <begin position="39"/>
        <end position="41"/>
    </location>
</feature>
<feature type="turn" evidence="29">
    <location>
        <begin position="42"/>
        <end position="44"/>
    </location>
</feature>
<feature type="strand" evidence="29">
    <location>
        <begin position="45"/>
        <end position="51"/>
    </location>
</feature>
<feature type="helix" evidence="29">
    <location>
        <begin position="52"/>
        <end position="55"/>
    </location>
</feature>
<feature type="strand" evidence="30">
    <location>
        <begin position="63"/>
        <end position="65"/>
    </location>
</feature>
<feature type="strand" evidence="29">
    <location>
        <begin position="69"/>
        <end position="76"/>
    </location>
</feature>
<feature type="turn" evidence="29">
    <location>
        <begin position="80"/>
        <end position="82"/>
    </location>
</feature>
<feature type="helix" evidence="29">
    <location>
        <begin position="85"/>
        <end position="90"/>
    </location>
</feature>
<feature type="helix" evidence="29">
    <location>
        <begin position="93"/>
        <end position="99"/>
    </location>
</feature>
<feature type="strand" evidence="29">
    <location>
        <begin position="103"/>
        <end position="107"/>
    </location>
</feature>
<feature type="strand" evidence="29">
    <location>
        <begin position="110"/>
        <end position="114"/>
    </location>
</feature>
<feature type="strand" evidence="29">
    <location>
        <begin position="119"/>
        <end position="126"/>
    </location>
</feature>
<feature type="helix" evidence="29">
    <location>
        <begin position="131"/>
        <end position="141"/>
    </location>
</feature>
<feature type="helix" evidence="29">
    <location>
        <begin position="144"/>
        <end position="147"/>
    </location>
</feature>
<feature type="helix" evidence="29">
    <location>
        <begin position="152"/>
        <end position="154"/>
    </location>
</feature>
<feature type="helix" evidence="29">
    <location>
        <begin position="184"/>
        <end position="186"/>
    </location>
</feature>
<feature type="turn" evidence="29">
    <location>
        <begin position="187"/>
        <end position="189"/>
    </location>
</feature>
<feature type="strand" evidence="29">
    <location>
        <begin position="192"/>
        <end position="195"/>
    </location>
</feature>
<feature type="strand" evidence="29">
    <location>
        <begin position="197"/>
        <end position="205"/>
    </location>
</feature>
<feature type="helix" evidence="29">
    <location>
        <begin position="207"/>
        <end position="220"/>
    </location>
</feature>
<feature type="turn" evidence="29">
    <location>
        <begin position="221"/>
        <end position="223"/>
    </location>
</feature>
<feature type="helix" evidence="29">
    <location>
        <begin position="225"/>
        <end position="238"/>
    </location>
</feature>
<feature type="helix" evidence="29">
    <location>
        <begin position="240"/>
        <end position="242"/>
    </location>
</feature>
<feature type="helix" evidence="29">
    <location>
        <begin position="249"/>
        <end position="259"/>
    </location>
</feature>
<feature type="helix" evidence="29">
    <location>
        <begin position="267"/>
        <end position="281"/>
    </location>
</feature>
<feature type="helix" evidence="29">
    <location>
        <begin position="283"/>
        <end position="287"/>
    </location>
</feature>
<feature type="strand" evidence="29">
    <location>
        <begin position="297"/>
        <end position="299"/>
    </location>
</feature>
<feature type="turn" evidence="29">
    <location>
        <begin position="304"/>
        <end position="307"/>
    </location>
</feature>
<feature type="helix" evidence="29">
    <location>
        <begin position="310"/>
        <end position="332"/>
    </location>
</feature>
<feature type="helix" evidence="29">
    <location>
        <begin position="336"/>
        <end position="347"/>
    </location>
</feature>
<feature type="helix" evidence="29">
    <location>
        <begin position="348"/>
        <end position="350"/>
    </location>
</feature>
<name>CDND2_ENTH5</name>
<comment type="function">
    <text evidence="2 3 5 6 7 10">Cyclic nucleotide synthase (second messenger synthase) of a CBASS antivirus system (PubMed:30787435, PubMed:34077735, PubMed:36755092). CBASS (cyclic oligonucleotide-based antiphage signaling system) provides immunity against bacteriophages (PubMed:32544385, PubMed:36755092, PubMed:36796558). The CD-NTase protein (CdnD, this protein) synthesizes cyclic nucleotides in response to infection; these serve as specific second messenger signals. The signals activate a diverse range of effectors, leading to bacterial cell death and thus abortive phage infection (PubMed:32544385, PubMed:36755092, PubMed:36796558). A type II-C(AAG) CBASS system (PubMed:32839535).</text>
</comment>
<comment type="function">
    <text evidence="2 5 6">Cyclic trinucleotide synthase that catalyzes the synthesis of 3',3',3'-cyclic AMP-AMP-GMP (cAAG) as the major product, a second messenger for cell signal transduction (PubMed:30787435, PubMed:34077735, PubMed:36755092). Uses ATP as the first donor nucleotide, followed by GTP (PubMed:34077735).</text>
</comment>
<comment type="function">
    <text evidence="3 6 7">Protects E.coli against phage T2 infection (PubMed:32544385, PubMed:36755092). When the cdnD-cap2-cap3-cap4 operon is introduced in E.coli there is a more than 10(3) decrease in the efficiency of T2 plaque formation (PubMed:32544385). The operon does not protect against phage T5 and only about 10-fold against T7 (PubMed:32544385). Expression of cdnD-cap4 alone protects E.coli against phage T2 infection (PubMed:36755092, PubMed:36796558).</text>
</comment>
<comment type="catalytic activity">
    <reaction evidence="2 5 6">
        <text>GTP + 2 ATP = 3',3',3'-cAAG + 3 diphosphate</text>
        <dbReference type="Rhea" id="RHEA:60476"/>
        <dbReference type="ChEBI" id="CHEBI:30616"/>
        <dbReference type="ChEBI" id="CHEBI:33019"/>
        <dbReference type="ChEBI" id="CHEBI:37565"/>
        <dbReference type="ChEBI" id="CHEBI:143810"/>
    </reaction>
    <physiologicalReaction direction="left-to-right" evidence="12">
        <dbReference type="Rhea" id="RHEA:60477"/>
    </physiologicalReaction>
</comment>
<comment type="cofactor">
    <cofactor evidence="4 19 20">
        <name>Mg(2+)</name>
        <dbReference type="ChEBI" id="CHEBI:18420"/>
    </cofactor>
    <text evidence="4">Binds 3 Mg(2+) ions per subunit; 1 is probably structural, the other 2 are probably catalytic.</text>
</comment>
<comment type="activity regulation">
    <text evidence="6">Primed for activation by Cap2 which conjugates it to cellular proteins; activation is target protein-specific (green fluorescent protein does not activate the enzyme), but which protein(s) activate it is unclear (PubMed:36755092).</text>
</comment>
<comment type="subunit">
    <text evidence="4 5 6">Monomer (PubMed:33836064, PubMed:34077735). Crystallizes as a Cap2 homodimer bound on each side by a CdnD monomer (PubMed:36755092).</text>
</comment>
<comment type="induction">
    <text evidence="13">Part of a CBASS operon consisting of cap4-cdnD-cap2-cap3.</text>
</comment>
<comment type="domain">
    <text evidence="4">Has an N-terminal catalytic domain and a C-terminal helical domain (PubMed:33836064).</text>
</comment>
<comment type="PTM">
    <text evidence="6 8">In bacteria expressing cap4-dncV-cap2-cap3, this protein is conjugated to a number of other proteins by Cap2, probably via this protein's C-terminal Ala residue (PubMed:36755092, PubMed:36848932). More conjugated DncV is found in the absence of Cap3 (PubMed:36848932).</text>
</comment>
<comment type="similarity">
    <text evidence="12">Belongs to the CD-NTase family. D02 subfamily.</text>
</comment>
<protein>
    <recommendedName>
        <fullName evidence="12">Cyclic AMP-AMP-GMP synthase</fullName>
        <ecNumber evidence="2">2.7.7.-</ecNumber>
    </recommendedName>
    <alternativeName>
        <fullName evidence="9">cGAS/DncV-like nucleotidyltransferase</fullName>
        <shortName evidence="9">CD-NTase038</shortName>
        <shortName evidence="11">EcCdnD</shortName>
    </alternativeName>
</protein>
<dbReference type="EC" id="2.7.7.-" evidence="2"/>
<dbReference type="EMBL" id="KI973084">
    <property type="protein sequence ID" value="EUL38999.1"/>
    <property type="molecule type" value="Genomic_DNA"/>
</dbReference>
<dbReference type="RefSeq" id="WP_032676400.1">
    <property type="nucleotide sequence ID" value="NZ_KI973084.1"/>
</dbReference>
<dbReference type="PDB" id="7D48">
    <property type="method" value="X-ray"/>
    <property type="resolution" value="2.15 A"/>
    <property type="chains" value="A=1-381"/>
</dbReference>
<dbReference type="PDB" id="7D4J">
    <property type="method" value="X-ray"/>
    <property type="resolution" value="2.09 A"/>
    <property type="chains" value="A=1-381"/>
</dbReference>
<dbReference type="PDB" id="7D4O">
    <property type="method" value="X-ray"/>
    <property type="resolution" value="1.87 A"/>
    <property type="chains" value="A/B=1-381"/>
</dbReference>
<dbReference type="PDB" id="7D4S">
    <property type="method" value="X-ray"/>
    <property type="resolution" value="1.93 A"/>
    <property type="chains" value="A=1-381"/>
</dbReference>
<dbReference type="PDB" id="7D4U">
    <property type="method" value="X-ray"/>
    <property type="resolution" value="2.70 A"/>
    <property type="chains" value="A=1-381"/>
</dbReference>
<dbReference type="PDB" id="7LJL">
    <property type="method" value="X-ray"/>
    <property type="resolution" value="1.45 A"/>
    <property type="chains" value="A/B=1-381"/>
</dbReference>
<dbReference type="PDB" id="7TO3">
    <property type="method" value="EM"/>
    <property type="resolution" value="2.74 A"/>
    <property type="chains" value="C/D=2-381"/>
</dbReference>
<dbReference type="PDB" id="7TQD">
    <property type="method" value="EM"/>
    <property type="resolution" value="2.90 A"/>
    <property type="chains" value="C=2-381"/>
</dbReference>
<dbReference type="PDB" id="7TSQ">
    <property type="method" value="X-ray"/>
    <property type="resolution" value="2.11 A"/>
    <property type="chains" value="C/D=370-381"/>
</dbReference>
<dbReference type="PDB" id="7TSX">
    <property type="method" value="X-ray"/>
    <property type="resolution" value="1.77 A"/>
    <property type="chains" value="C/D=370-381"/>
</dbReference>
<dbReference type="PDBsum" id="7D48"/>
<dbReference type="PDBsum" id="7D4J"/>
<dbReference type="PDBsum" id="7D4O"/>
<dbReference type="PDBsum" id="7D4S"/>
<dbReference type="PDBsum" id="7D4U"/>
<dbReference type="PDBsum" id="7LJL"/>
<dbReference type="PDBsum" id="7TO3"/>
<dbReference type="PDBsum" id="7TQD"/>
<dbReference type="PDBsum" id="7TSQ"/>
<dbReference type="PDBsum" id="7TSX"/>
<dbReference type="EMDB" id="EMD-26028"/>
<dbReference type="EMDB" id="EMD-26066"/>
<dbReference type="SMR" id="P0DSP4"/>
<dbReference type="GO" id="GO:0005524">
    <property type="term" value="F:ATP binding"/>
    <property type="evidence" value="ECO:0007669"/>
    <property type="project" value="UniProtKB-KW"/>
</dbReference>
<dbReference type="GO" id="GO:0005525">
    <property type="term" value="F:GTP binding"/>
    <property type="evidence" value="ECO:0007669"/>
    <property type="project" value="UniProtKB-KW"/>
</dbReference>
<dbReference type="GO" id="GO:0046872">
    <property type="term" value="F:metal ion binding"/>
    <property type="evidence" value="ECO:0007669"/>
    <property type="project" value="UniProtKB-KW"/>
</dbReference>
<dbReference type="GO" id="GO:0016779">
    <property type="term" value="F:nucleotidyltransferase activity"/>
    <property type="evidence" value="ECO:0007669"/>
    <property type="project" value="UniProtKB-KW"/>
</dbReference>
<dbReference type="GO" id="GO:0051607">
    <property type="term" value="P:defense response to virus"/>
    <property type="evidence" value="ECO:0007669"/>
    <property type="project" value="UniProtKB-KW"/>
</dbReference>
<dbReference type="GO" id="GO:0009117">
    <property type="term" value="P:nucleotide metabolic process"/>
    <property type="evidence" value="ECO:0007669"/>
    <property type="project" value="UniProtKB-KW"/>
</dbReference>
<dbReference type="InterPro" id="IPR043519">
    <property type="entry name" value="NT_sf"/>
</dbReference>
<dbReference type="Pfam" id="PF18144">
    <property type="entry name" value="SMODS"/>
    <property type="match status" value="1"/>
</dbReference>
<dbReference type="SUPFAM" id="SSF81301">
    <property type="entry name" value="Nucleotidyltransferase"/>
    <property type="match status" value="1"/>
</dbReference>
<evidence type="ECO:0000256" key="1">
    <source>
        <dbReference type="SAM" id="MobiDB-lite"/>
    </source>
</evidence>
<evidence type="ECO:0000269" key="2">
    <source>
    </source>
</evidence>
<evidence type="ECO:0000269" key="3">
    <source>
    </source>
</evidence>
<evidence type="ECO:0000269" key="4">
    <source>
    </source>
</evidence>
<evidence type="ECO:0000269" key="5">
    <source>
    </source>
</evidence>
<evidence type="ECO:0000269" key="6">
    <source>
    </source>
</evidence>
<evidence type="ECO:0000269" key="7">
    <source>
    </source>
</evidence>
<evidence type="ECO:0000269" key="8">
    <source>
    </source>
</evidence>
<evidence type="ECO:0000303" key="9">
    <source>
    </source>
</evidence>
<evidence type="ECO:0000303" key="10">
    <source>
    </source>
</evidence>
<evidence type="ECO:0000303" key="11">
    <source>
    </source>
</evidence>
<evidence type="ECO:0000305" key="12">
    <source>
    </source>
</evidence>
<evidence type="ECO:0000305" key="13">
    <source>
    </source>
</evidence>
<evidence type="ECO:0000305" key="14">
    <source>
    </source>
</evidence>
<evidence type="ECO:0000305" key="15">
    <source>
    </source>
</evidence>
<evidence type="ECO:0000305" key="16">
    <source>
    </source>
</evidence>
<evidence type="ECO:0000312" key="17">
    <source>
        <dbReference type="EMBL" id="EUL38999.1"/>
    </source>
</evidence>
<evidence type="ECO:0000312" key="18">
    <source>
        <dbReference type="PDB" id="7D48"/>
    </source>
</evidence>
<evidence type="ECO:0000312" key="19">
    <source>
        <dbReference type="PDB" id="7D4J"/>
    </source>
</evidence>
<evidence type="ECO:0000312" key="20">
    <source>
        <dbReference type="PDB" id="7D4O"/>
    </source>
</evidence>
<evidence type="ECO:0000312" key="21">
    <source>
        <dbReference type="PDB" id="7D4S"/>
    </source>
</evidence>
<evidence type="ECO:0000312" key="22">
    <source>
        <dbReference type="PDB" id="7D4U"/>
    </source>
</evidence>
<evidence type="ECO:0007744" key="23">
    <source>
        <dbReference type="PDB" id="7D4O"/>
    </source>
</evidence>
<evidence type="ECO:0007744" key="24">
    <source>
        <dbReference type="PDB" id="7LJL"/>
    </source>
</evidence>
<evidence type="ECO:0007744" key="25">
    <source>
        <dbReference type="PDB" id="7TO3"/>
    </source>
</evidence>
<evidence type="ECO:0007744" key="26">
    <source>
        <dbReference type="PDB" id="7TQD"/>
    </source>
</evidence>
<evidence type="ECO:0007744" key="27">
    <source>
        <dbReference type="PDB" id="7TSQ"/>
    </source>
</evidence>
<evidence type="ECO:0007744" key="28">
    <source>
        <dbReference type="PDB" id="7TSX"/>
    </source>
</evidence>
<evidence type="ECO:0007829" key="29">
    <source>
        <dbReference type="PDB" id="7LJL"/>
    </source>
</evidence>
<evidence type="ECO:0007829" key="30">
    <source>
        <dbReference type="PDB" id="7TO3"/>
    </source>
</evidence>
<organism>
    <name type="scientific">Enterobacter hormaechei subsp. hoffmannii (strain UCI 50)</name>
    <dbReference type="NCBI Taxonomy" id="1400155"/>
    <lineage>
        <taxon>Bacteria</taxon>
        <taxon>Pseudomonadati</taxon>
        <taxon>Pseudomonadota</taxon>
        <taxon>Gammaproteobacteria</taxon>
        <taxon>Enterobacterales</taxon>
        <taxon>Enterobacteriaceae</taxon>
        <taxon>Enterobacter</taxon>
        <taxon>Enterobacter cloacae complex</taxon>
    </lineage>
</organism>
<gene>
    <name evidence="9" type="primary">cdnD02</name>
    <name evidence="17" type="ORF">P853_02262</name>
</gene>
<accession>P0DSP4</accession>
<proteinExistence type="evidence at protein level"/>
<reference key="1">
    <citation type="submission" date="2014-01" db="EMBL/GenBank/DDBJ databases">
        <title>The Genome Sequence of Enterobacter cloacae UCI 50.</title>
        <authorList>
            <consortium name="The Broad Institute Genomics Platform"/>
            <consortium name="The Broad Institute Genome Sequencing Center for Infectious Disease"/>
            <person name="Murphy C."/>
            <person name="Cosimi L."/>
            <person name="Cerqueira G."/>
            <person name="Feldgarden M."/>
            <person name="Earl A."/>
            <person name="Hung D."/>
            <person name="Onderdonk A.B."/>
            <person name="Ferraro M.J."/>
            <person name="Hooper D."/>
            <person name="Dekker J."/>
            <person name="O'Brien T."/>
            <person name="Huang S."/>
            <person name="Quan V."/>
            <person name="Ernst C."/>
            <person name="Delaney M."/>
            <person name="DuBois A."/>
            <person name="Kim D.S."/>
            <person name="Young S.K."/>
            <person name="Zeng Q."/>
            <person name="Gargeya S."/>
            <person name="Fitzgerald M."/>
            <person name="Abouelleil A."/>
            <person name="Alvarado L."/>
            <person name="Berlin A.M."/>
            <person name="Chapman S.B."/>
            <person name="Gainer-Dewar J."/>
            <person name="Goldberg J."/>
            <person name="Gnerre S."/>
            <person name="Griggs A."/>
            <person name="Gujja S."/>
            <person name="Hansen M."/>
            <person name="Howarth C."/>
            <person name="Imamovic A."/>
            <person name="Ireland A."/>
            <person name="Larimer J."/>
            <person name="McCowan C."/>
            <person name="Murphy C."/>
            <person name="Pearson M."/>
            <person name="Poon T.W."/>
            <person name="Priest M."/>
            <person name="Roberts A."/>
            <person name="Saif S."/>
            <person name="Shea T."/>
            <person name="Sykes S."/>
            <person name="Wortman J."/>
            <person name="Nusbaum C."/>
            <person name="Birren B."/>
        </authorList>
    </citation>
    <scope>NUCLEOTIDE SEQUENCE [LARGE SCALE GENOMIC DNA]</scope>
    <source>
        <strain>UCI 50</strain>
    </source>
</reference>
<reference key="2">
    <citation type="journal article" date="2019" name="Nature">
        <title>Bacterial cGAS-like enzymes synthesize diverse nucleotide signals.</title>
        <authorList>
            <person name="Whiteley A.T."/>
            <person name="Eaglesham J.B."/>
            <person name="de Oliveira Mann C.C."/>
            <person name="Morehouse B.R."/>
            <person name="Lowey B."/>
            <person name="Nieminen E.A."/>
            <person name="Danilchanka O."/>
            <person name="King D.S."/>
            <person name="Lee A.S.Y."/>
            <person name="Mekalanos J.J."/>
            <person name="Kranzusch P.J."/>
        </authorList>
    </citation>
    <scope>FUNCTION</scope>
    <scope>CATALYTIC ACTIVITY</scope>
    <scope>NOMENCLATURE</scope>
    <scope>SIMILARITY</scope>
    <source>
        <strain>UCI 50</strain>
    </source>
</reference>
<reference key="3">
    <citation type="journal article" date="2020" name="Cell">
        <title>CBASS immunity uses CARF-related effectors to sense 3'-5' and 2'-5'-linked cyclic oligonucleotide signals and protect bacteria from phage infection.</title>
        <authorList>
            <person name="Lowey B."/>
            <person name="Whiteley A.T."/>
            <person name="Keszei A.F.A."/>
            <person name="Morehouse B.R."/>
            <person name="Antine S.P."/>
            <person name="Cabrera V.J."/>
            <person name="Kashin D."/>
            <person name="Schwede F."/>
            <person name="Mekalanos J.J."/>
            <person name="Shao S."/>
            <person name="Lee A.S.Y."/>
            <person name="Kranzusch P.J."/>
        </authorList>
    </citation>
    <scope>ANTIVIRAL DEFENSE</scope>
    <scope>OPERON STRUCTURE</scope>
    <scope>MUTAGENESIS OF 69-ASP--ASP-71</scope>
    <source>
        <strain>UCI 50</strain>
    </source>
</reference>
<reference key="4">
    <citation type="journal article" date="2020" name="Nat. Microbiol.">
        <title>Diversity and classification of cyclic-oligonucleotide-based anti-phage signalling systems.</title>
        <authorList>
            <person name="Millman A."/>
            <person name="Melamed S."/>
            <person name="Amitai G."/>
            <person name="Sorek R."/>
        </authorList>
    </citation>
    <scope>CLASSIFICATION AND NOMENCLATURE</scope>
</reference>
<reference key="5">
    <citation type="journal article" date="2023" name="Int. J. Biol. Macromol.">
        <title>Specific recognition of cyclic oligonucleotides by Cap4 for phage infection.</title>
        <authorList>
            <person name="Chang J.J."/>
            <person name="You B.J."/>
            <person name="Tien N."/>
            <person name="Wang Y.C."/>
            <person name="Yang C.S."/>
            <person name="Hou M.H."/>
            <person name="Chen Y."/>
        </authorList>
    </citation>
    <scope>ANTIVIRAL DEFENSE</scope>
</reference>
<reference key="6">
    <citation type="journal article" date="2023" name="Nature">
        <title>Ubiquitin-like conjugation by bacterial cGAS enhances anti-phage defence.</title>
        <authorList>
            <person name="Jenson J.M."/>
            <person name="Li T."/>
            <person name="Du F."/>
            <person name="Ea C.K."/>
            <person name="Chen Z.J."/>
        </authorList>
    </citation>
    <scope>CONJUGATION TO CELLULAR PROTEINS</scope>
    <source>
        <strain>UCI 50</strain>
    </source>
</reference>
<reference evidence="18 19 20 21 22" key="7">
    <citation type="journal article" date="2021" name="Nucleic Acids Res.">
        <title>Crystal structure and functional implication of a bacterial cyclic AMP-AMP-GMP synthetase.</title>
        <authorList>
            <person name="Ko T.P."/>
            <person name="Wang Y.C."/>
            <person name="Tsai C.L."/>
            <person name="Yang C.S."/>
            <person name="Hou M.H."/>
            <person name="Chen Y."/>
        </authorList>
    </citation>
    <scope>X-RAY CRYSTALLOGRAPHY (1.87 ANGSTROMS) IN APO-FORM AND WITH MAGNESIUM AND NUCLEOTIDE SUBSTRATES</scope>
    <scope>PROBABLE ACTIVE SITE</scope>
    <scope>COFACTOR</scope>
    <scope>SUBUNIT</scope>
    <scope>NUCLEOTIDE-BINDING</scope>
    <scope>MUTAGENESIS OF 69-ASP--ASP-71 AND ASP-69</scope>
    <source>
        <strain>UCI 50</strain>
    </source>
</reference>
<reference evidence="24" key="8">
    <citation type="journal article" date="2021" name="Cell Rep.">
        <title>Molecular basis of CD-NTase nucleotide selection in CBASS anti-phage defense.</title>
        <authorList>
            <person name="Govande A.A."/>
            <person name="Duncan-Lowey B."/>
            <person name="Eaglesham J.B."/>
            <person name="Whiteley A.T."/>
            <person name="Kranzusch P.J."/>
        </authorList>
    </citation>
    <scope>X-RAY CRYSTALLOGRAPHY (1.45 ANGSTROMS)IN COMPLEX WITH 2 ATP AND MAGNESIUM</scope>
    <scope>FUNCTION</scope>
    <scope>CATALYTIC ACTIVITY</scope>
    <scope>PROBABLE ACTIVE SITE</scope>
    <scope>REACTION MECHANISM</scope>
    <scope>NUCLEOTIDE-BINDING</scope>
    <scope>MUTAGENESIS OF GLN-51; ASP-71; ASP-196; THR-205; GLN-210 AND TYR-250</scope>
    <source>
        <strain>UCI 50</strain>
    </source>
</reference>
<reference evidence="25 26 27 28" key="9">
    <citation type="journal article" date="2023" name="Nature">
        <title>An E1-E2 fusion protein primes antiviral immune signalling in bacteria.</title>
        <authorList>
            <person name="Ledvina H.E."/>
            <person name="Ye Q."/>
            <person name="Gu Y."/>
            <person name="Sullivan A.E."/>
            <person name="Quan Y."/>
            <person name="Lau R.K."/>
            <person name="Zhou H."/>
            <person name="Corbett K.D."/>
            <person name="Whiteley A.T."/>
        </authorList>
    </citation>
    <scope>X-RAY CRYSTALLOGRAPHY (1.77 ANGSTROMS) IN COMPLEX WITH CAP2; MAGNESIUM AND NUCLEOTIDES</scope>
    <scope>ANTIVIRAL DEFENSE</scope>
    <scope>FUNCTION</scope>
    <scope>ACTIVITY REGULATION</scope>
    <scope>SUBUNIT</scope>
    <scope>CONJUGATION TO CELLULAR PROTEINS</scope>
    <scope>MUTAGENESIS OF 29-ARG--ARG-34; THR-30; 170-TRP-LEU-171; 363-GLY--ALA-381; GLN-375; LYS-376; THR-377; GLY-378; ARG-379; PHE-380 AND ALA-381</scope>
</reference>